<organism>
    <name type="scientific">Pseudomonas putida</name>
    <name type="common">Arthrobacter siderocapsulatus</name>
    <dbReference type="NCBI Taxonomy" id="303"/>
    <lineage>
        <taxon>Bacteria</taxon>
        <taxon>Pseudomonadati</taxon>
        <taxon>Pseudomonadota</taxon>
        <taxon>Gammaproteobacteria</taxon>
        <taxon>Pseudomonadales</taxon>
        <taxon>Pseudomonadaceae</taxon>
        <taxon>Pseudomonas</taxon>
    </lineage>
</organism>
<keyword id="KW-0614">Plasmid</keyword>
<accession>Q02210</accession>
<proteinExistence type="predicted"/>
<geneLocation type="plasmid">
    <name>pMDH7.2</name>
</geneLocation>
<feature type="chain" id="PRO_0000066312" description="Uncharacterized protein in morA 3'region">
    <location>
        <begin position="1"/>
        <end position="16" status="greater than"/>
    </location>
</feature>
<feature type="non-terminal residue">
    <location>
        <position position="16"/>
    </location>
</feature>
<protein>
    <recommendedName>
        <fullName>Uncharacterized protein in morA 3'region</fullName>
    </recommendedName>
</protein>
<dbReference type="EMBL" id="M94775">
    <property type="protein sequence ID" value="AAB17357.1"/>
    <property type="molecule type" value="Genomic_DNA"/>
</dbReference>
<dbReference type="PIR" id="S30384">
    <property type="entry name" value="S30384"/>
</dbReference>
<reference key="1">
    <citation type="journal article" date="1993" name="Biochem. J.">
        <title>Nucleotide sequence and over-expression of morphine dehydrogenase, a plasmid-encoded gene from Pseudomonas putida M10.</title>
        <authorList>
            <person name="Willey D.L."/>
            <person name="Caswell D.A."/>
            <person name="Lowe C.R."/>
            <person name="Bruce N.C."/>
        </authorList>
    </citation>
    <scope>NUCLEOTIDE SEQUENCE [GENOMIC DNA]</scope>
    <source>
        <strain>M10</strain>
    </source>
</reference>
<name>YMOR_PSEPU</name>
<sequence length="16" mass="1962">MKRQDLPRSRSLRSCE</sequence>